<accession>Q8NVW1</accession>
<proteinExistence type="inferred from homology"/>
<sequence length="167" mass="19563">MKKLYTSYGTYGFLHQIKINNPTHQLFQFSASDTSVIFEETDGETVLKSPTKYDVIKEIGEFSEHHFYCAIFIPSTEDHAYQLEKKLISVDDNFRNFGGFKSYRLLRPAKGTTYKIYFGFADRHAYEDFKQSDAFNDHFSKDALSHYFGSSGQHSSYFERYLYPIKE</sequence>
<organism>
    <name type="scientific">Staphylococcus aureus (strain MW2)</name>
    <dbReference type="NCBI Taxonomy" id="196620"/>
    <lineage>
        <taxon>Bacteria</taxon>
        <taxon>Bacillati</taxon>
        <taxon>Bacillota</taxon>
        <taxon>Bacilli</taxon>
        <taxon>Bacillales</taxon>
        <taxon>Staphylococcaceae</taxon>
        <taxon>Staphylococcus</taxon>
    </lineage>
</organism>
<gene>
    <name type="primary">traP</name>
    <name type="ordered locus">MW1775</name>
</gene>
<keyword id="KW-0472">Membrane</keyword>
<keyword id="KW-0597">Phosphoprotein</keyword>
<keyword id="KW-0843">Virulence</keyword>
<feature type="chain" id="PRO_0000289341" description="Signal transduction protein TRAP">
    <location>
        <begin position="1"/>
        <end position="167"/>
    </location>
</feature>
<feature type="domain" description="ABM">
    <location>
        <begin position="67"/>
        <end position="158"/>
    </location>
</feature>
<feature type="modified residue" description="Phosphohistidine" evidence="1">
    <location>
        <position position="66"/>
    </location>
</feature>
<feature type="modified residue" description="Phosphohistidine" evidence="1">
    <location>
        <position position="79"/>
    </location>
</feature>
<feature type="modified residue" description="Phosphohistidine" evidence="1">
    <location>
        <position position="154"/>
    </location>
</feature>
<dbReference type="EMBL" id="BA000033">
    <property type="protein sequence ID" value="BAB95640.1"/>
    <property type="molecule type" value="Genomic_DNA"/>
</dbReference>
<dbReference type="RefSeq" id="WP_000737978.1">
    <property type="nucleotide sequence ID" value="NC_003923.1"/>
</dbReference>
<dbReference type="SMR" id="Q8NVW1"/>
<dbReference type="KEGG" id="sam:MW1775"/>
<dbReference type="HOGENOM" id="CLU_116220_0_0_9"/>
<dbReference type="GO" id="GO:0016020">
    <property type="term" value="C:membrane"/>
    <property type="evidence" value="ECO:0007669"/>
    <property type="project" value="UniProtKB-SubCell"/>
</dbReference>
<dbReference type="Gene3D" id="3.30.70.100">
    <property type="match status" value="1"/>
</dbReference>
<dbReference type="InterPro" id="IPR007138">
    <property type="entry name" value="ABM_dom"/>
</dbReference>
<dbReference type="InterPro" id="IPR011008">
    <property type="entry name" value="Dimeric_a/b-barrel"/>
</dbReference>
<dbReference type="InterPro" id="IPR050404">
    <property type="entry name" value="Heme-degrading_MO"/>
</dbReference>
<dbReference type="PANTHER" id="PTHR34474">
    <property type="entry name" value="SIGNAL TRANSDUCTION PROTEIN TRAP"/>
    <property type="match status" value="1"/>
</dbReference>
<dbReference type="PANTHER" id="PTHR34474:SF2">
    <property type="entry name" value="SIGNAL TRANSDUCTION PROTEIN TRAP"/>
    <property type="match status" value="1"/>
</dbReference>
<dbReference type="SUPFAM" id="SSF54909">
    <property type="entry name" value="Dimeric alpha+beta barrel"/>
    <property type="match status" value="1"/>
</dbReference>
<dbReference type="PROSITE" id="PS51725">
    <property type="entry name" value="ABM"/>
    <property type="match status" value="1"/>
</dbReference>
<comment type="function">
    <text evidence="1">Signal transduction protein, which is a major regulator of staphylococcal pathogenesis. Phosphorylated TRAP leads to the activation of agr system and consequent RNAIII synthesis resulting in the expression of several virulence factors. Up-regulates the expression of most toxins and genes known to be necessary for biofilm formation (By similarity).</text>
</comment>
<comment type="subcellular location">
    <subcellularLocation>
        <location>Membrane</location>
    </subcellularLocation>
    <text evidence="1">Membrane-associated.</text>
</comment>
<comment type="PTM">
    <text evidence="1">Each of the three conserved histidine residues contributes to TRAP phosphorylation. Phosphorylation is essential for TRAP activity (By similarity).</text>
</comment>
<comment type="PTM">
    <text evidence="1">Phosphorylation of TRAP is activated by RAP and necessary for the induction of RNAIII gene expression but not for ongoing transcription. TRAP is dephosphorylated from the mid-exponential phase of growth, which is when agr is activated and AIP is produced. RIP acts by inhibiting TRAP phosphorylation (By similarity).</text>
</comment>
<comment type="similarity">
    <text evidence="2">Belongs to the TRAP family.</text>
</comment>
<evidence type="ECO:0000250" key="1"/>
<evidence type="ECO:0000305" key="2"/>
<protein>
    <recommendedName>
        <fullName>Signal transduction protein TRAP</fullName>
    </recommendedName>
    <alternativeName>
        <fullName>Target of RNAIII-activating protein</fullName>
    </alternativeName>
</protein>
<reference key="1">
    <citation type="journal article" date="2002" name="Lancet">
        <title>Genome and virulence determinants of high virulence community-acquired MRSA.</title>
        <authorList>
            <person name="Baba T."/>
            <person name="Takeuchi F."/>
            <person name="Kuroda M."/>
            <person name="Yuzawa H."/>
            <person name="Aoki K."/>
            <person name="Oguchi A."/>
            <person name="Nagai Y."/>
            <person name="Iwama N."/>
            <person name="Asano K."/>
            <person name="Naimi T."/>
            <person name="Kuroda H."/>
            <person name="Cui L."/>
            <person name="Yamamoto K."/>
            <person name="Hiramatsu K."/>
        </authorList>
    </citation>
    <scope>NUCLEOTIDE SEQUENCE [LARGE SCALE GENOMIC DNA]</scope>
    <source>
        <strain>MW2</strain>
    </source>
</reference>
<name>TRAP_STAAW</name>